<comment type="function">
    <text evidence="1">Catalyzes the condensation of carbamoyl phosphate and aspartate to form carbamoyl aspartate and inorganic phosphate, the committed step in the de novo pyrimidine nucleotide biosynthesis pathway.</text>
</comment>
<comment type="catalytic activity">
    <reaction evidence="1">
        <text>carbamoyl phosphate + L-aspartate = N-carbamoyl-L-aspartate + phosphate + H(+)</text>
        <dbReference type="Rhea" id="RHEA:20013"/>
        <dbReference type="ChEBI" id="CHEBI:15378"/>
        <dbReference type="ChEBI" id="CHEBI:29991"/>
        <dbReference type="ChEBI" id="CHEBI:32814"/>
        <dbReference type="ChEBI" id="CHEBI:43474"/>
        <dbReference type="ChEBI" id="CHEBI:58228"/>
        <dbReference type="EC" id="2.1.3.2"/>
    </reaction>
</comment>
<comment type="pathway">
    <text evidence="1">Pyrimidine metabolism; UMP biosynthesis via de novo pathway; (S)-dihydroorotate from bicarbonate: step 2/3.</text>
</comment>
<comment type="subunit">
    <text evidence="1">Heterododecamer (2C3:3R2) of six catalytic PyrB chains organized as two trimers (C3), and six regulatory PyrI chains organized as three dimers (R2).</text>
</comment>
<comment type="similarity">
    <text evidence="1">Belongs to the aspartate/ornithine carbamoyltransferase superfamily. ATCase family.</text>
</comment>
<evidence type="ECO:0000255" key="1">
    <source>
        <dbReference type="HAMAP-Rule" id="MF_00001"/>
    </source>
</evidence>
<reference key="1">
    <citation type="journal article" date="2005" name="Nat. Biotechnol.">
        <title>Complete genome sequence of the acetic acid bacterium Gluconobacter oxydans.</title>
        <authorList>
            <person name="Prust C."/>
            <person name="Hoffmeister M."/>
            <person name="Liesegang H."/>
            <person name="Wiezer A."/>
            <person name="Fricke W.F."/>
            <person name="Ehrenreich A."/>
            <person name="Gottschalk G."/>
            <person name="Deppenmeier U."/>
        </authorList>
    </citation>
    <scope>NUCLEOTIDE SEQUENCE [LARGE SCALE GENOMIC DNA]</scope>
    <source>
        <strain>621H</strain>
    </source>
</reference>
<proteinExistence type="inferred from homology"/>
<protein>
    <recommendedName>
        <fullName evidence="1">Aspartate carbamoyltransferase catalytic subunit</fullName>
        <ecNumber evidence="1">2.1.3.2</ecNumber>
    </recommendedName>
    <alternativeName>
        <fullName evidence="1">Aspartate transcarbamylase</fullName>
        <shortName evidence="1">ATCase</shortName>
    </alternativeName>
</protein>
<name>PYRB_GLUOX</name>
<keyword id="KW-0665">Pyrimidine biosynthesis</keyword>
<keyword id="KW-1185">Reference proteome</keyword>
<keyword id="KW-0808">Transferase</keyword>
<dbReference type="EC" id="2.1.3.2" evidence="1"/>
<dbReference type="EMBL" id="CP000009">
    <property type="protein sequence ID" value="AAW61028.1"/>
    <property type="molecule type" value="Genomic_DNA"/>
</dbReference>
<dbReference type="RefSeq" id="WP_011252820.1">
    <property type="nucleotide sequence ID" value="NC_006677.1"/>
</dbReference>
<dbReference type="SMR" id="Q5FRG8"/>
<dbReference type="STRING" id="290633.GOX1267"/>
<dbReference type="KEGG" id="gox:GOX1267"/>
<dbReference type="eggNOG" id="COG0540">
    <property type="taxonomic scope" value="Bacteria"/>
</dbReference>
<dbReference type="HOGENOM" id="CLU_043846_2_0_5"/>
<dbReference type="UniPathway" id="UPA00070">
    <property type="reaction ID" value="UER00116"/>
</dbReference>
<dbReference type="Proteomes" id="UP000006375">
    <property type="component" value="Chromosome"/>
</dbReference>
<dbReference type="GO" id="GO:0005829">
    <property type="term" value="C:cytosol"/>
    <property type="evidence" value="ECO:0007669"/>
    <property type="project" value="TreeGrafter"/>
</dbReference>
<dbReference type="GO" id="GO:0016597">
    <property type="term" value="F:amino acid binding"/>
    <property type="evidence" value="ECO:0007669"/>
    <property type="project" value="InterPro"/>
</dbReference>
<dbReference type="GO" id="GO:0004070">
    <property type="term" value="F:aspartate carbamoyltransferase activity"/>
    <property type="evidence" value="ECO:0007669"/>
    <property type="project" value="UniProtKB-UniRule"/>
</dbReference>
<dbReference type="GO" id="GO:0006207">
    <property type="term" value="P:'de novo' pyrimidine nucleobase biosynthetic process"/>
    <property type="evidence" value="ECO:0007669"/>
    <property type="project" value="InterPro"/>
</dbReference>
<dbReference type="GO" id="GO:0044205">
    <property type="term" value="P:'de novo' UMP biosynthetic process"/>
    <property type="evidence" value="ECO:0007669"/>
    <property type="project" value="UniProtKB-UniRule"/>
</dbReference>
<dbReference type="GO" id="GO:0006520">
    <property type="term" value="P:amino acid metabolic process"/>
    <property type="evidence" value="ECO:0007669"/>
    <property type="project" value="InterPro"/>
</dbReference>
<dbReference type="FunFam" id="3.40.50.1370:FF:000007">
    <property type="entry name" value="Aspartate carbamoyltransferase"/>
    <property type="match status" value="1"/>
</dbReference>
<dbReference type="Gene3D" id="3.40.50.1370">
    <property type="entry name" value="Aspartate/ornithine carbamoyltransferase"/>
    <property type="match status" value="2"/>
</dbReference>
<dbReference type="HAMAP" id="MF_00001">
    <property type="entry name" value="Asp_carb_tr"/>
    <property type="match status" value="1"/>
</dbReference>
<dbReference type="InterPro" id="IPR006132">
    <property type="entry name" value="Asp/Orn_carbamoyltranf_P-bd"/>
</dbReference>
<dbReference type="InterPro" id="IPR006130">
    <property type="entry name" value="Asp/Orn_carbamoylTrfase"/>
</dbReference>
<dbReference type="InterPro" id="IPR036901">
    <property type="entry name" value="Asp/Orn_carbamoylTrfase_sf"/>
</dbReference>
<dbReference type="InterPro" id="IPR002082">
    <property type="entry name" value="Asp_carbamoyltransf"/>
</dbReference>
<dbReference type="InterPro" id="IPR006131">
    <property type="entry name" value="Asp_carbamoyltransf_Asp/Orn-bd"/>
</dbReference>
<dbReference type="NCBIfam" id="TIGR00670">
    <property type="entry name" value="asp_carb_tr"/>
    <property type="match status" value="1"/>
</dbReference>
<dbReference type="NCBIfam" id="NF002032">
    <property type="entry name" value="PRK00856.1"/>
    <property type="match status" value="1"/>
</dbReference>
<dbReference type="PANTHER" id="PTHR45753:SF6">
    <property type="entry name" value="ASPARTATE CARBAMOYLTRANSFERASE"/>
    <property type="match status" value="1"/>
</dbReference>
<dbReference type="PANTHER" id="PTHR45753">
    <property type="entry name" value="ORNITHINE CARBAMOYLTRANSFERASE, MITOCHONDRIAL"/>
    <property type="match status" value="1"/>
</dbReference>
<dbReference type="Pfam" id="PF00185">
    <property type="entry name" value="OTCace"/>
    <property type="match status" value="1"/>
</dbReference>
<dbReference type="Pfam" id="PF02729">
    <property type="entry name" value="OTCace_N"/>
    <property type="match status" value="1"/>
</dbReference>
<dbReference type="PRINTS" id="PR00100">
    <property type="entry name" value="AOTCASE"/>
</dbReference>
<dbReference type="PRINTS" id="PR00101">
    <property type="entry name" value="ATCASE"/>
</dbReference>
<dbReference type="SUPFAM" id="SSF53671">
    <property type="entry name" value="Aspartate/ornithine carbamoyltransferase"/>
    <property type="match status" value="1"/>
</dbReference>
<dbReference type="PROSITE" id="PS00097">
    <property type="entry name" value="CARBAMOYLTRANSFERASE"/>
    <property type="match status" value="1"/>
</dbReference>
<organism>
    <name type="scientific">Gluconobacter oxydans (strain 621H)</name>
    <name type="common">Gluconobacter suboxydans</name>
    <dbReference type="NCBI Taxonomy" id="290633"/>
    <lineage>
        <taxon>Bacteria</taxon>
        <taxon>Pseudomonadati</taxon>
        <taxon>Pseudomonadota</taxon>
        <taxon>Alphaproteobacteria</taxon>
        <taxon>Acetobacterales</taxon>
        <taxon>Acetobacteraceae</taxon>
        <taxon>Gluconobacter</taxon>
    </lineage>
</organism>
<gene>
    <name evidence="1" type="primary">pyrB</name>
    <name type="ordered locus">GOX1267</name>
</gene>
<feature type="chain" id="PRO_0000113139" description="Aspartate carbamoyltransferase catalytic subunit">
    <location>
        <begin position="1"/>
        <end position="313"/>
    </location>
</feature>
<feature type="binding site" evidence="1">
    <location>
        <position position="61"/>
    </location>
    <ligand>
        <name>carbamoyl phosphate</name>
        <dbReference type="ChEBI" id="CHEBI:58228"/>
    </ligand>
</feature>
<feature type="binding site" evidence="1">
    <location>
        <position position="62"/>
    </location>
    <ligand>
        <name>carbamoyl phosphate</name>
        <dbReference type="ChEBI" id="CHEBI:58228"/>
    </ligand>
</feature>
<feature type="binding site" evidence="1">
    <location>
        <position position="89"/>
    </location>
    <ligand>
        <name>L-aspartate</name>
        <dbReference type="ChEBI" id="CHEBI:29991"/>
    </ligand>
</feature>
<feature type="binding site" evidence="1">
    <location>
        <position position="111"/>
    </location>
    <ligand>
        <name>carbamoyl phosphate</name>
        <dbReference type="ChEBI" id="CHEBI:58228"/>
    </ligand>
</feature>
<feature type="binding site" evidence="1">
    <location>
        <position position="139"/>
    </location>
    <ligand>
        <name>carbamoyl phosphate</name>
        <dbReference type="ChEBI" id="CHEBI:58228"/>
    </ligand>
</feature>
<feature type="binding site" evidence="1">
    <location>
        <position position="142"/>
    </location>
    <ligand>
        <name>carbamoyl phosphate</name>
        <dbReference type="ChEBI" id="CHEBI:58228"/>
    </ligand>
</feature>
<feature type="binding site" evidence="1">
    <location>
        <position position="172"/>
    </location>
    <ligand>
        <name>L-aspartate</name>
        <dbReference type="ChEBI" id="CHEBI:29991"/>
    </ligand>
</feature>
<feature type="binding site" evidence="1">
    <location>
        <position position="227"/>
    </location>
    <ligand>
        <name>L-aspartate</name>
        <dbReference type="ChEBI" id="CHEBI:29991"/>
    </ligand>
</feature>
<feature type="binding site" evidence="1">
    <location>
        <position position="268"/>
    </location>
    <ligand>
        <name>carbamoyl phosphate</name>
        <dbReference type="ChEBI" id="CHEBI:58228"/>
    </ligand>
</feature>
<feature type="binding site" evidence="1">
    <location>
        <position position="269"/>
    </location>
    <ligand>
        <name>carbamoyl phosphate</name>
        <dbReference type="ChEBI" id="CHEBI:58228"/>
    </ligand>
</feature>
<accession>Q5FRG8</accession>
<sequence>MPERPSVPRHLLGIEGLSAEQLVPFLDLAESYALLSRSRSAPRDALRGRTVINLFYEDSTRTRTSFELAGKRLGADVINMSVATSSVNKGETLLDTAATLNAMRCDLLVVRHAQSGAPALLSRKVEASVVNAGDGTHEHPTQALLDALTIRRHFGRLEGLTVAICGDVGHSRVARSNIHLLTAFGNRVRLAGPPTLLPGAMAGLGNVELYSDMDRALEGADVVMSLRLQKERMGAGLVPSAREYFHFFGLDRRRLALAKPGALVMHPGPMNRGVEIASDVADSDQSVISEQVEMGVAVRMAVLDRLSRARMPA</sequence>